<reference key="1">
    <citation type="submission" date="2007-04" db="EMBL/GenBank/DDBJ databases">
        <title>Complete sequence of Pyrobaculum arsenaticum DSM 13514.</title>
        <authorList>
            <consortium name="US DOE Joint Genome Institute"/>
            <person name="Copeland A."/>
            <person name="Lucas S."/>
            <person name="Lapidus A."/>
            <person name="Barry K."/>
            <person name="Glavina del Rio T."/>
            <person name="Dalin E."/>
            <person name="Tice H."/>
            <person name="Pitluck S."/>
            <person name="Chain P."/>
            <person name="Malfatti S."/>
            <person name="Shin M."/>
            <person name="Vergez L."/>
            <person name="Schmutz J."/>
            <person name="Larimer F."/>
            <person name="Land M."/>
            <person name="Hauser L."/>
            <person name="Kyrpides N."/>
            <person name="Mikhailova N."/>
            <person name="Cozen A.E."/>
            <person name="Fitz-Gibbon S.T."/>
            <person name="House C.H."/>
            <person name="Saltikov C."/>
            <person name="Lowe T.M."/>
            <person name="Richardson P."/>
        </authorList>
    </citation>
    <scope>NUCLEOTIDE SEQUENCE [LARGE SCALE GENOMIC DNA]</scope>
    <source>
        <strain>ATCC 700994 / DSM 13514 / JCM 11321 / PZ6</strain>
    </source>
</reference>
<feature type="chain" id="PRO_1000016426" description="Histidine--tRNA ligase">
    <location>
        <begin position="1"/>
        <end position="419"/>
    </location>
</feature>
<evidence type="ECO:0000255" key="1">
    <source>
        <dbReference type="HAMAP-Rule" id="MF_00127"/>
    </source>
</evidence>
<comment type="catalytic activity">
    <reaction evidence="1">
        <text>tRNA(His) + L-histidine + ATP = L-histidyl-tRNA(His) + AMP + diphosphate + H(+)</text>
        <dbReference type="Rhea" id="RHEA:17313"/>
        <dbReference type="Rhea" id="RHEA-COMP:9665"/>
        <dbReference type="Rhea" id="RHEA-COMP:9689"/>
        <dbReference type="ChEBI" id="CHEBI:15378"/>
        <dbReference type="ChEBI" id="CHEBI:30616"/>
        <dbReference type="ChEBI" id="CHEBI:33019"/>
        <dbReference type="ChEBI" id="CHEBI:57595"/>
        <dbReference type="ChEBI" id="CHEBI:78442"/>
        <dbReference type="ChEBI" id="CHEBI:78527"/>
        <dbReference type="ChEBI" id="CHEBI:456215"/>
        <dbReference type="EC" id="6.1.1.21"/>
    </reaction>
</comment>
<comment type="subcellular location">
    <subcellularLocation>
        <location evidence="1">Cytoplasm</location>
    </subcellularLocation>
</comment>
<comment type="similarity">
    <text evidence="1">Belongs to the class-II aminoacyl-tRNA synthetase family.</text>
</comment>
<keyword id="KW-0030">Aminoacyl-tRNA synthetase</keyword>
<keyword id="KW-0067">ATP-binding</keyword>
<keyword id="KW-0963">Cytoplasm</keyword>
<keyword id="KW-0436">Ligase</keyword>
<keyword id="KW-0547">Nucleotide-binding</keyword>
<keyword id="KW-0648">Protein biosynthesis</keyword>
<dbReference type="EC" id="6.1.1.21" evidence="1"/>
<dbReference type="EMBL" id="CP000660">
    <property type="protein sequence ID" value="ABP50249.1"/>
    <property type="molecule type" value="Genomic_DNA"/>
</dbReference>
<dbReference type="RefSeq" id="WP_011900156.1">
    <property type="nucleotide sequence ID" value="NC_009376.1"/>
</dbReference>
<dbReference type="SMR" id="A4WIN2"/>
<dbReference type="STRING" id="340102.Pars_0658"/>
<dbReference type="GeneID" id="5056360"/>
<dbReference type="KEGG" id="pas:Pars_0658"/>
<dbReference type="HOGENOM" id="CLU_025113_3_0_2"/>
<dbReference type="OrthoDB" id="8659at2157"/>
<dbReference type="PhylomeDB" id="A4WIN2"/>
<dbReference type="Proteomes" id="UP000001567">
    <property type="component" value="Chromosome"/>
</dbReference>
<dbReference type="GO" id="GO:0005737">
    <property type="term" value="C:cytoplasm"/>
    <property type="evidence" value="ECO:0007669"/>
    <property type="project" value="UniProtKB-SubCell"/>
</dbReference>
<dbReference type="GO" id="GO:0005524">
    <property type="term" value="F:ATP binding"/>
    <property type="evidence" value="ECO:0007669"/>
    <property type="project" value="UniProtKB-UniRule"/>
</dbReference>
<dbReference type="GO" id="GO:0004821">
    <property type="term" value="F:histidine-tRNA ligase activity"/>
    <property type="evidence" value="ECO:0007669"/>
    <property type="project" value="UniProtKB-UniRule"/>
</dbReference>
<dbReference type="GO" id="GO:0006427">
    <property type="term" value="P:histidyl-tRNA aminoacylation"/>
    <property type="evidence" value="ECO:0007669"/>
    <property type="project" value="UniProtKB-UniRule"/>
</dbReference>
<dbReference type="GO" id="GO:0000105">
    <property type="term" value="P:L-histidine biosynthetic process"/>
    <property type="evidence" value="ECO:0007669"/>
    <property type="project" value="InterPro"/>
</dbReference>
<dbReference type="CDD" id="cd00773">
    <property type="entry name" value="HisRS-like_core"/>
    <property type="match status" value="1"/>
</dbReference>
<dbReference type="Gene3D" id="3.40.50.800">
    <property type="entry name" value="Anticodon-binding domain"/>
    <property type="match status" value="1"/>
</dbReference>
<dbReference type="Gene3D" id="3.30.930.10">
    <property type="entry name" value="Bira Bifunctional Protein, Domain 2"/>
    <property type="match status" value="1"/>
</dbReference>
<dbReference type="HAMAP" id="MF_00127">
    <property type="entry name" value="His_tRNA_synth"/>
    <property type="match status" value="1"/>
</dbReference>
<dbReference type="HAMAP" id="MF_00125">
    <property type="entry name" value="HisZ"/>
    <property type="match status" value="1"/>
</dbReference>
<dbReference type="InterPro" id="IPR006195">
    <property type="entry name" value="aa-tRNA-synth_II"/>
</dbReference>
<dbReference type="InterPro" id="IPR045864">
    <property type="entry name" value="aa-tRNA-synth_II/BPL/LPL"/>
</dbReference>
<dbReference type="InterPro" id="IPR004154">
    <property type="entry name" value="Anticodon-bd"/>
</dbReference>
<dbReference type="InterPro" id="IPR036621">
    <property type="entry name" value="Anticodon-bd_dom_sf"/>
</dbReference>
<dbReference type="InterPro" id="IPR015807">
    <property type="entry name" value="His-tRNA-ligase"/>
</dbReference>
<dbReference type="InterPro" id="IPR041715">
    <property type="entry name" value="HisRS-like_core"/>
</dbReference>
<dbReference type="InterPro" id="IPR004516">
    <property type="entry name" value="HisRS/HisZ"/>
</dbReference>
<dbReference type="InterPro" id="IPR004517">
    <property type="entry name" value="HisZ"/>
</dbReference>
<dbReference type="NCBIfam" id="TIGR00442">
    <property type="entry name" value="hisS"/>
    <property type="match status" value="1"/>
</dbReference>
<dbReference type="PANTHER" id="PTHR43707:SF1">
    <property type="entry name" value="HISTIDINE--TRNA LIGASE, MITOCHONDRIAL-RELATED"/>
    <property type="match status" value="1"/>
</dbReference>
<dbReference type="PANTHER" id="PTHR43707">
    <property type="entry name" value="HISTIDYL-TRNA SYNTHETASE"/>
    <property type="match status" value="1"/>
</dbReference>
<dbReference type="Pfam" id="PF03129">
    <property type="entry name" value="HGTP_anticodon"/>
    <property type="match status" value="1"/>
</dbReference>
<dbReference type="Pfam" id="PF13393">
    <property type="entry name" value="tRNA-synt_His"/>
    <property type="match status" value="1"/>
</dbReference>
<dbReference type="PIRSF" id="PIRSF001549">
    <property type="entry name" value="His-tRNA_synth"/>
    <property type="match status" value="1"/>
</dbReference>
<dbReference type="SUPFAM" id="SSF52954">
    <property type="entry name" value="Class II aaRS ABD-related"/>
    <property type="match status" value="1"/>
</dbReference>
<dbReference type="SUPFAM" id="SSF55681">
    <property type="entry name" value="Class II aaRS and biotin synthetases"/>
    <property type="match status" value="1"/>
</dbReference>
<dbReference type="PROSITE" id="PS50862">
    <property type="entry name" value="AA_TRNA_LIGASE_II"/>
    <property type="match status" value="1"/>
</dbReference>
<accession>A4WIN2</accession>
<protein>
    <recommendedName>
        <fullName evidence="1">Histidine--tRNA ligase</fullName>
        <ecNumber evidence="1">6.1.1.21</ecNumber>
    </recommendedName>
    <alternativeName>
        <fullName evidence="1">Histidyl-tRNA synthetase</fullName>
        <shortName evidence="1">HisRS</shortName>
    </alternativeName>
</protein>
<sequence>MTGLPDQLRRPVRGMRDWMPQQLYALRRMEEVLSSVAEQYGYRRVETPVVEHFEVLAKKAGQEVINEIYYFRDKAGRELGLRFDMTVPIARVLSYNLDLPRPVRWYYFSKVFRYDEPQHGRYREFFQFGVELIGSASPRADAEVVQLLAASLEAAGASKYVIRINDRRAVDKLLESLGALSHRDAVYRALDKKLKLPREEVIGIMTSGGLPRDAAEKIYDTASEMSLDEAVEVLRRLDGRLGEAYAKFVKYLEAAVPLERFKFDMSIVRGLDYYTGVVFEAFVGDYWLAVGGGGRYDDLLELYSGVKIPALGFAIGVERLMEAVGLQSVEKPLDYYIYIFDDDAYKHAVALANRLRKQGHSVVVELGEKNLKDVFEYVLKIGTRYLVLIGRKELEKGVVKIRDLQKRGEVEVPLSALLS</sequence>
<proteinExistence type="inferred from homology"/>
<organism>
    <name type="scientific">Pyrobaculum arsenaticum (strain DSM 13514 / JCM 11321 / PZ6)</name>
    <dbReference type="NCBI Taxonomy" id="340102"/>
    <lineage>
        <taxon>Archaea</taxon>
        <taxon>Thermoproteota</taxon>
        <taxon>Thermoprotei</taxon>
        <taxon>Thermoproteales</taxon>
        <taxon>Thermoproteaceae</taxon>
        <taxon>Pyrobaculum</taxon>
    </lineage>
</organism>
<name>SYH_PYRAR</name>
<gene>
    <name evidence="1" type="primary">hisS</name>
    <name type="ordered locus">Pars_0658</name>
</gene>